<gene>
    <name evidence="1" type="primary">purL</name>
    <name type="ordered locus">ABC1030</name>
</gene>
<organism>
    <name type="scientific">Shouchella clausii (strain KSM-K16)</name>
    <name type="common">Alkalihalobacillus clausii</name>
    <dbReference type="NCBI Taxonomy" id="66692"/>
    <lineage>
        <taxon>Bacteria</taxon>
        <taxon>Bacillati</taxon>
        <taxon>Bacillota</taxon>
        <taxon>Bacilli</taxon>
        <taxon>Bacillales</taxon>
        <taxon>Bacillaceae</taxon>
        <taxon>Shouchella</taxon>
    </lineage>
</organism>
<reference key="1">
    <citation type="submission" date="2003-10" db="EMBL/GenBank/DDBJ databases">
        <title>The complete genome sequence of the alkaliphilic Bacillus clausii KSM-K16.</title>
        <authorList>
            <person name="Takaki Y."/>
            <person name="Kageyama Y."/>
            <person name="Shimamura S."/>
            <person name="Suzuki H."/>
            <person name="Nishi S."/>
            <person name="Hatada Y."/>
            <person name="Kawai S."/>
            <person name="Ito S."/>
            <person name="Horikoshi K."/>
        </authorList>
    </citation>
    <scope>NUCLEOTIDE SEQUENCE [LARGE SCALE GENOMIC DNA]</scope>
    <source>
        <strain>KSM-K16</strain>
    </source>
</reference>
<proteinExistence type="inferred from homology"/>
<comment type="function">
    <text evidence="1">Part of the phosphoribosylformylglycinamidine synthase complex involved in the purines biosynthetic pathway. Catalyzes the ATP-dependent conversion of formylglycinamide ribonucleotide (FGAR) and glutamine to yield formylglycinamidine ribonucleotide (FGAM) and glutamate. The FGAM synthase complex is composed of three subunits. PurQ produces an ammonia molecule by converting glutamine to glutamate. PurL transfers the ammonia molecule to FGAR to form FGAM in an ATP-dependent manner. PurS interacts with PurQ and PurL and is thought to assist in the transfer of the ammonia molecule from PurQ to PurL.</text>
</comment>
<comment type="catalytic activity">
    <reaction evidence="1">
        <text>N(2)-formyl-N(1)-(5-phospho-beta-D-ribosyl)glycinamide + L-glutamine + ATP + H2O = 2-formamido-N(1)-(5-O-phospho-beta-D-ribosyl)acetamidine + L-glutamate + ADP + phosphate + H(+)</text>
        <dbReference type="Rhea" id="RHEA:17129"/>
        <dbReference type="ChEBI" id="CHEBI:15377"/>
        <dbReference type="ChEBI" id="CHEBI:15378"/>
        <dbReference type="ChEBI" id="CHEBI:29985"/>
        <dbReference type="ChEBI" id="CHEBI:30616"/>
        <dbReference type="ChEBI" id="CHEBI:43474"/>
        <dbReference type="ChEBI" id="CHEBI:58359"/>
        <dbReference type="ChEBI" id="CHEBI:147286"/>
        <dbReference type="ChEBI" id="CHEBI:147287"/>
        <dbReference type="ChEBI" id="CHEBI:456216"/>
        <dbReference type="EC" id="6.3.5.3"/>
    </reaction>
</comment>
<comment type="pathway">
    <text evidence="1">Purine metabolism; IMP biosynthesis via de novo pathway; 5-amino-1-(5-phospho-D-ribosyl)imidazole from N(2)-formyl-N(1)-(5-phospho-D-ribosyl)glycinamide: step 1/2.</text>
</comment>
<comment type="subunit">
    <text evidence="1">Monomer. Part of the FGAM synthase complex composed of 1 PurL, 1 PurQ and 2 PurS subunits.</text>
</comment>
<comment type="subcellular location">
    <subcellularLocation>
        <location evidence="1">Cytoplasm</location>
    </subcellularLocation>
</comment>
<comment type="similarity">
    <text evidence="1">Belongs to the FGAMS family.</text>
</comment>
<name>PURL_SHOC1</name>
<dbReference type="EC" id="6.3.5.3" evidence="1"/>
<dbReference type="EMBL" id="AP006627">
    <property type="protein sequence ID" value="BAD63569.1"/>
    <property type="molecule type" value="Genomic_DNA"/>
</dbReference>
<dbReference type="RefSeq" id="WP_011245885.1">
    <property type="nucleotide sequence ID" value="NC_006582.1"/>
</dbReference>
<dbReference type="SMR" id="Q5WJ86"/>
<dbReference type="STRING" id="66692.ABC1030"/>
<dbReference type="KEGG" id="bcl:ABC1030"/>
<dbReference type="eggNOG" id="COG0046">
    <property type="taxonomic scope" value="Bacteria"/>
</dbReference>
<dbReference type="HOGENOM" id="CLU_003100_0_1_9"/>
<dbReference type="OrthoDB" id="9804441at2"/>
<dbReference type="UniPathway" id="UPA00074">
    <property type="reaction ID" value="UER00128"/>
</dbReference>
<dbReference type="Proteomes" id="UP000001168">
    <property type="component" value="Chromosome"/>
</dbReference>
<dbReference type="GO" id="GO:0005737">
    <property type="term" value="C:cytoplasm"/>
    <property type="evidence" value="ECO:0007669"/>
    <property type="project" value="UniProtKB-SubCell"/>
</dbReference>
<dbReference type="GO" id="GO:0005524">
    <property type="term" value="F:ATP binding"/>
    <property type="evidence" value="ECO:0007669"/>
    <property type="project" value="UniProtKB-UniRule"/>
</dbReference>
<dbReference type="GO" id="GO:0000287">
    <property type="term" value="F:magnesium ion binding"/>
    <property type="evidence" value="ECO:0007669"/>
    <property type="project" value="UniProtKB-UniRule"/>
</dbReference>
<dbReference type="GO" id="GO:0004642">
    <property type="term" value="F:phosphoribosylformylglycinamidine synthase activity"/>
    <property type="evidence" value="ECO:0007669"/>
    <property type="project" value="UniProtKB-UniRule"/>
</dbReference>
<dbReference type="GO" id="GO:0006189">
    <property type="term" value="P:'de novo' IMP biosynthetic process"/>
    <property type="evidence" value="ECO:0007669"/>
    <property type="project" value="UniProtKB-UniRule"/>
</dbReference>
<dbReference type="CDD" id="cd02203">
    <property type="entry name" value="PurL_repeat1"/>
    <property type="match status" value="1"/>
</dbReference>
<dbReference type="CDD" id="cd02204">
    <property type="entry name" value="PurL_repeat2"/>
    <property type="match status" value="1"/>
</dbReference>
<dbReference type="FunFam" id="3.30.1330.10:FF:000004">
    <property type="entry name" value="Phosphoribosylformylglycinamidine synthase subunit PurL"/>
    <property type="match status" value="1"/>
</dbReference>
<dbReference type="FunFam" id="3.90.650.10:FF:000009">
    <property type="entry name" value="Phosphoribosylformylglycinamidine synthase subunit PurL"/>
    <property type="match status" value="1"/>
</dbReference>
<dbReference type="Gene3D" id="3.90.650.10">
    <property type="entry name" value="PurM-like C-terminal domain"/>
    <property type="match status" value="2"/>
</dbReference>
<dbReference type="Gene3D" id="3.30.1330.10">
    <property type="entry name" value="PurM-like, N-terminal domain"/>
    <property type="match status" value="2"/>
</dbReference>
<dbReference type="HAMAP" id="MF_00420">
    <property type="entry name" value="PurL_2"/>
    <property type="match status" value="1"/>
</dbReference>
<dbReference type="InterPro" id="IPR010074">
    <property type="entry name" value="PRibForGlyAmidine_synth_PurL"/>
</dbReference>
<dbReference type="InterPro" id="IPR041609">
    <property type="entry name" value="PurL_linker"/>
</dbReference>
<dbReference type="InterPro" id="IPR010918">
    <property type="entry name" value="PurM-like_C_dom"/>
</dbReference>
<dbReference type="InterPro" id="IPR036676">
    <property type="entry name" value="PurM-like_C_sf"/>
</dbReference>
<dbReference type="InterPro" id="IPR016188">
    <property type="entry name" value="PurM-like_N"/>
</dbReference>
<dbReference type="InterPro" id="IPR036921">
    <property type="entry name" value="PurM-like_N_sf"/>
</dbReference>
<dbReference type="NCBIfam" id="TIGR01736">
    <property type="entry name" value="FGAM_synth_II"/>
    <property type="match status" value="1"/>
</dbReference>
<dbReference type="NCBIfam" id="NF002290">
    <property type="entry name" value="PRK01213.1"/>
    <property type="match status" value="1"/>
</dbReference>
<dbReference type="PANTHER" id="PTHR43555">
    <property type="entry name" value="PHOSPHORIBOSYLFORMYLGLYCINAMIDINE SYNTHASE SUBUNIT PURL"/>
    <property type="match status" value="1"/>
</dbReference>
<dbReference type="PANTHER" id="PTHR43555:SF1">
    <property type="entry name" value="PHOSPHORIBOSYLFORMYLGLYCINAMIDINE SYNTHASE SUBUNIT PURL"/>
    <property type="match status" value="1"/>
</dbReference>
<dbReference type="Pfam" id="PF00586">
    <property type="entry name" value="AIRS"/>
    <property type="match status" value="2"/>
</dbReference>
<dbReference type="Pfam" id="PF02769">
    <property type="entry name" value="AIRS_C"/>
    <property type="match status" value="2"/>
</dbReference>
<dbReference type="Pfam" id="PF18072">
    <property type="entry name" value="FGAR-AT_linker"/>
    <property type="match status" value="1"/>
</dbReference>
<dbReference type="PIRSF" id="PIRSF001587">
    <property type="entry name" value="FGAM_synthase_II"/>
    <property type="match status" value="1"/>
</dbReference>
<dbReference type="SUPFAM" id="SSF56042">
    <property type="entry name" value="PurM C-terminal domain-like"/>
    <property type="match status" value="2"/>
</dbReference>
<dbReference type="SUPFAM" id="SSF55326">
    <property type="entry name" value="PurM N-terminal domain-like"/>
    <property type="match status" value="2"/>
</dbReference>
<protein>
    <recommendedName>
        <fullName evidence="1">Phosphoribosylformylglycinamidine synthase subunit PurL</fullName>
        <shortName evidence="1">FGAM synthase</shortName>
        <ecNumber evidence="1">6.3.5.3</ecNumber>
    </recommendedName>
    <alternativeName>
        <fullName evidence="1">Formylglycinamide ribonucleotide amidotransferase subunit II</fullName>
        <shortName evidence="1">FGAR amidotransferase II</shortName>
        <shortName evidence="1">FGAR-AT II</shortName>
    </alternativeName>
    <alternativeName>
        <fullName evidence="1">Glutamine amidotransferase PurL</fullName>
    </alternativeName>
    <alternativeName>
        <fullName evidence="1">Phosphoribosylformylglycinamidine synthase subunit II</fullName>
    </alternativeName>
</protein>
<feature type="chain" id="PRO_0000100439" description="Phosphoribosylformylglycinamidine synthase subunit PurL">
    <location>
        <begin position="1"/>
        <end position="741"/>
    </location>
</feature>
<feature type="active site" evidence="1">
    <location>
        <position position="54"/>
    </location>
</feature>
<feature type="active site" description="Proton acceptor" evidence="1">
    <location>
        <position position="100"/>
    </location>
</feature>
<feature type="binding site" evidence="1">
    <location>
        <position position="57"/>
    </location>
    <ligand>
        <name>ATP</name>
        <dbReference type="ChEBI" id="CHEBI:30616"/>
    </ligand>
</feature>
<feature type="binding site" evidence="1">
    <location>
        <position position="96"/>
    </location>
    <ligand>
        <name>ATP</name>
        <dbReference type="ChEBI" id="CHEBI:30616"/>
    </ligand>
</feature>
<feature type="binding site" evidence="1">
    <location>
        <position position="98"/>
    </location>
    <ligand>
        <name>Mg(2+)</name>
        <dbReference type="ChEBI" id="CHEBI:18420"/>
        <label>1</label>
    </ligand>
</feature>
<feature type="binding site" evidence="1">
    <location>
        <begin position="99"/>
        <end position="102"/>
    </location>
    <ligand>
        <name>substrate</name>
    </ligand>
</feature>
<feature type="binding site" evidence="1">
    <location>
        <position position="121"/>
    </location>
    <ligand>
        <name>substrate</name>
    </ligand>
</feature>
<feature type="binding site" evidence="1">
    <location>
        <position position="122"/>
    </location>
    <ligand>
        <name>Mg(2+)</name>
        <dbReference type="ChEBI" id="CHEBI:18420"/>
        <label>2</label>
    </ligand>
</feature>
<feature type="binding site" evidence="1">
    <location>
        <position position="245"/>
    </location>
    <ligand>
        <name>substrate</name>
    </ligand>
</feature>
<feature type="binding site" evidence="1">
    <location>
        <position position="273"/>
    </location>
    <ligand>
        <name>Mg(2+)</name>
        <dbReference type="ChEBI" id="CHEBI:18420"/>
        <label>2</label>
    </ligand>
</feature>
<feature type="binding site" evidence="1">
    <location>
        <begin position="317"/>
        <end position="319"/>
    </location>
    <ligand>
        <name>substrate</name>
    </ligand>
</feature>
<feature type="binding site" evidence="1">
    <location>
        <position position="500"/>
    </location>
    <ligand>
        <name>ATP</name>
        <dbReference type="ChEBI" id="CHEBI:30616"/>
    </ligand>
</feature>
<feature type="binding site" evidence="1">
    <location>
        <position position="537"/>
    </location>
    <ligand>
        <name>ATP</name>
        <dbReference type="ChEBI" id="CHEBI:30616"/>
    </ligand>
</feature>
<feature type="binding site" evidence="1">
    <location>
        <position position="538"/>
    </location>
    <ligand>
        <name>Mg(2+)</name>
        <dbReference type="ChEBI" id="CHEBI:18420"/>
        <label>1</label>
    </ligand>
</feature>
<feature type="binding site" evidence="1">
    <location>
        <position position="540"/>
    </location>
    <ligand>
        <name>substrate</name>
    </ligand>
</feature>
<sequence length="741" mass="80026">MSQLLEPSAETIKAERLYREMGLTDDEFALAEKIVGRPLNFTETGLFSVMWSEHCSYKNSKVLLKKFPTDGENVLQGPGEGAGIIDIKDEQAVVFKIESHNHPSAIEPYQGAATGVGGILRDVFSMGARPVALLNSLRFGELESKKVKYLFEEVVAGIAGYGNCVGVPTVGGEVQFDPCYESNPLVNAMCVGLIDHKDIQKGQAKGVGNTVMYVGASTGRDGIHGATFASEELSEDSDAKRPAVQVGDPFMEKLLLEACLEVVQSDALIGIQDMGAAGLVSSSAEMASKAGSGIEMNLDLVPQREAGMTPYEMMLSESQERMLLVVEKGREHEIKATFERWNLHAVEVGVVTDDRRLRLTHKGEIVADVPVDALAEDAPVYHKPSKVPAYFDAFQQQAPYIPEITEANETLLKLLAQPTIASKEWVYEQYDYMVQTNTVVEPGSDAAVIRIRGTNKALAMTTDCNSRYLYVDPEMGGKIAIAEAARNLVCSGAKPLGVTDCLNYGNPEKPEIFWQLEKSTDGLSEACRELGTPVIGGNVSLYNERSGGAVYPTPVIGMVGLVEDVAHITTQSFKNAGDLIYVIGETKAEFGGSELQKMLVGELSGKAPEIDLAVEKSRQQQLLSAIKQGLVQSAHDVAEGGLAVSLAEKMMECPFGAEVSLSLSAAELFAESQSRFIVTVKPSDQQRFENTVLDAVVVGAVTESRKLTIRNENGNAVIDLCQDELVKAWKGAIPCLLKSKA</sequence>
<evidence type="ECO:0000255" key="1">
    <source>
        <dbReference type="HAMAP-Rule" id="MF_00420"/>
    </source>
</evidence>
<keyword id="KW-0067">ATP-binding</keyword>
<keyword id="KW-0963">Cytoplasm</keyword>
<keyword id="KW-0436">Ligase</keyword>
<keyword id="KW-0460">Magnesium</keyword>
<keyword id="KW-0479">Metal-binding</keyword>
<keyword id="KW-0547">Nucleotide-binding</keyword>
<keyword id="KW-0658">Purine biosynthesis</keyword>
<keyword id="KW-1185">Reference proteome</keyword>
<accession>Q5WJ86</accession>